<comment type="function">
    <text evidence="1">Molecular chaperone that may interact with a ClpP-like protease involved in degradation of denatured proteins in the chloroplast.</text>
</comment>
<comment type="subcellular location">
    <subcellularLocation>
        <location evidence="6">Plastid</location>
        <location evidence="6">Chloroplast</location>
    </subcellularLocation>
</comment>
<comment type="tissue specificity">
    <text evidence="5">Widely expressed.</text>
</comment>
<comment type="similarity">
    <text evidence="6">Belongs to the ClpA/ClpB family. ClpC subfamily.</text>
</comment>
<comment type="sequence caution" evidence="6">
    <conflict type="erroneous gene model prediction">
        <sequence resource="EMBL-CDS" id="BAF14579"/>
    </conflict>
</comment>
<comment type="sequence caution" evidence="6">
    <conflict type="erroneous initiation">
        <sequence resource="EMBL-CDS" id="CAE05148"/>
    </conflict>
    <text>Truncated N-terminus.</text>
</comment>
<protein>
    <recommendedName>
        <fullName>Chaperone protein ClpC1, chloroplastic</fullName>
    </recommendedName>
    <alternativeName>
        <fullName>ATP-dependent Clp protease ATP-binding subunit ClpC homolog 1</fullName>
    </alternativeName>
    <alternativeName>
        <fullName>Casein lytic proteinase C1</fullName>
    </alternativeName>
</protein>
<keyword id="KW-0067">ATP-binding</keyword>
<keyword id="KW-0143">Chaperone</keyword>
<keyword id="KW-0150">Chloroplast</keyword>
<keyword id="KW-0547">Nucleotide-binding</keyword>
<keyword id="KW-0934">Plastid</keyword>
<keyword id="KW-1185">Reference proteome</keyword>
<keyword id="KW-0677">Repeat</keyword>
<keyword id="KW-0809">Transit peptide</keyword>
<feature type="transit peptide" description="Chloroplast" evidence="2">
    <location>
        <begin position="1"/>
        <end status="unknown"/>
    </location>
</feature>
<feature type="chain" id="PRO_0000412579" description="Chaperone protein ClpC1, chloroplastic">
    <location>
        <begin status="unknown"/>
        <end position="918"/>
    </location>
</feature>
<feature type="domain" description="Clp R" evidence="4">
    <location>
        <begin position="88"/>
        <end position="230"/>
    </location>
</feature>
<feature type="domain" description="UVR" evidence="3">
    <location>
        <begin position="505"/>
        <end position="540"/>
    </location>
</feature>
<feature type="region of interest" description="Repeat 1" evidence="4">
    <location>
        <begin position="91"/>
        <end position="156"/>
    </location>
</feature>
<feature type="region of interest" description="Repeat 2" evidence="4">
    <location>
        <begin position="166"/>
        <end position="230"/>
    </location>
</feature>
<feature type="region of interest" description="I" evidence="1">
    <location>
        <begin position="251"/>
        <end position="498"/>
    </location>
</feature>
<feature type="region of interest" description="II" evidence="1">
    <location>
        <begin position="565"/>
        <end position="756"/>
    </location>
</feature>
<feature type="binding site" evidence="2">
    <location>
        <begin position="296"/>
        <end position="303"/>
    </location>
    <ligand>
        <name>ATP</name>
        <dbReference type="ChEBI" id="CHEBI:30616"/>
    </ligand>
</feature>
<feature type="binding site" evidence="2">
    <location>
        <begin position="639"/>
        <end position="646"/>
    </location>
    <ligand>
        <name>ATP</name>
        <dbReference type="ChEBI" id="CHEBI:30616"/>
    </ligand>
</feature>
<gene>
    <name type="primary">CLPC1</name>
    <name type="ordered locus">Os04g0397100</name>
    <name type="ordered locus">LOC_Os04g32560</name>
    <name type="ORF">OSJNBa0039C07.4</name>
</gene>
<reference key="1">
    <citation type="journal article" date="2002" name="Nature">
        <title>Sequence and analysis of rice chromosome 4.</title>
        <authorList>
            <person name="Feng Q."/>
            <person name="Zhang Y."/>
            <person name="Hao P."/>
            <person name="Wang S."/>
            <person name="Fu G."/>
            <person name="Huang Y."/>
            <person name="Li Y."/>
            <person name="Zhu J."/>
            <person name="Liu Y."/>
            <person name="Hu X."/>
            <person name="Jia P."/>
            <person name="Zhang Y."/>
            <person name="Zhao Q."/>
            <person name="Ying K."/>
            <person name="Yu S."/>
            <person name="Tang Y."/>
            <person name="Weng Q."/>
            <person name="Zhang L."/>
            <person name="Lu Y."/>
            <person name="Mu J."/>
            <person name="Lu Y."/>
            <person name="Zhang L.S."/>
            <person name="Yu Z."/>
            <person name="Fan D."/>
            <person name="Liu X."/>
            <person name="Lu T."/>
            <person name="Li C."/>
            <person name="Wu Y."/>
            <person name="Sun T."/>
            <person name="Lei H."/>
            <person name="Li T."/>
            <person name="Hu H."/>
            <person name="Guan J."/>
            <person name="Wu M."/>
            <person name="Zhang R."/>
            <person name="Zhou B."/>
            <person name="Chen Z."/>
            <person name="Chen L."/>
            <person name="Jin Z."/>
            <person name="Wang R."/>
            <person name="Yin H."/>
            <person name="Cai Z."/>
            <person name="Ren S."/>
            <person name="Lv G."/>
            <person name="Gu W."/>
            <person name="Zhu G."/>
            <person name="Tu Y."/>
            <person name="Jia J."/>
            <person name="Zhang Y."/>
            <person name="Chen J."/>
            <person name="Kang H."/>
            <person name="Chen X."/>
            <person name="Shao C."/>
            <person name="Sun Y."/>
            <person name="Hu Q."/>
            <person name="Zhang X."/>
            <person name="Zhang W."/>
            <person name="Wang L."/>
            <person name="Ding C."/>
            <person name="Sheng H."/>
            <person name="Gu J."/>
            <person name="Chen S."/>
            <person name="Ni L."/>
            <person name="Zhu F."/>
            <person name="Chen W."/>
            <person name="Lan L."/>
            <person name="Lai Y."/>
            <person name="Cheng Z."/>
            <person name="Gu M."/>
            <person name="Jiang J."/>
            <person name="Li J."/>
            <person name="Hong G."/>
            <person name="Xue Y."/>
            <person name="Han B."/>
        </authorList>
    </citation>
    <scope>NUCLEOTIDE SEQUENCE [LARGE SCALE GENOMIC DNA]</scope>
    <source>
        <strain>cv. Nipponbare</strain>
    </source>
</reference>
<reference key="2">
    <citation type="journal article" date="2005" name="Nature">
        <title>The map-based sequence of the rice genome.</title>
        <authorList>
            <consortium name="International rice genome sequencing project (IRGSP)"/>
        </authorList>
    </citation>
    <scope>NUCLEOTIDE SEQUENCE [LARGE SCALE GENOMIC DNA]</scope>
    <source>
        <strain>cv. Nipponbare</strain>
    </source>
</reference>
<reference key="3">
    <citation type="journal article" date="2008" name="Nucleic Acids Res.">
        <title>The rice annotation project database (RAP-DB): 2008 update.</title>
        <authorList>
            <consortium name="The rice annotation project (RAP)"/>
        </authorList>
    </citation>
    <scope>GENOME REANNOTATION</scope>
    <source>
        <strain>cv. Nipponbare</strain>
    </source>
</reference>
<reference key="4">
    <citation type="journal article" date="2013" name="Rice">
        <title>Improvement of the Oryza sativa Nipponbare reference genome using next generation sequence and optical map data.</title>
        <authorList>
            <person name="Kawahara Y."/>
            <person name="de la Bastide M."/>
            <person name="Hamilton J.P."/>
            <person name="Kanamori H."/>
            <person name="McCombie W.R."/>
            <person name="Ouyang S."/>
            <person name="Schwartz D.C."/>
            <person name="Tanaka T."/>
            <person name="Wu J."/>
            <person name="Zhou S."/>
            <person name="Childs K.L."/>
            <person name="Davidson R.M."/>
            <person name="Lin H."/>
            <person name="Quesada-Ocampo L."/>
            <person name="Vaillancourt B."/>
            <person name="Sakai H."/>
            <person name="Lee S.S."/>
            <person name="Kim J."/>
            <person name="Numa H."/>
            <person name="Itoh T."/>
            <person name="Buell C.R."/>
            <person name="Matsumoto T."/>
        </authorList>
    </citation>
    <scope>GENOME REANNOTATION</scope>
    <source>
        <strain>cv. Nipponbare</strain>
    </source>
</reference>
<reference key="5">
    <citation type="journal article" date="2010" name="BMC Genomics">
        <title>Genome-wide analysis of rice ClpB/HSP100, ClpC and ClpD genes.</title>
        <authorList>
            <person name="Singh A."/>
            <person name="Singh U."/>
            <person name="Mittal D."/>
            <person name="Grover A."/>
        </authorList>
    </citation>
    <scope>TISSUE SPECIFICITY</scope>
</reference>
<organism>
    <name type="scientific">Oryza sativa subsp. japonica</name>
    <name type="common">Rice</name>
    <dbReference type="NCBI Taxonomy" id="39947"/>
    <lineage>
        <taxon>Eukaryota</taxon>
        <taxon>Viridiplantae</taxon>
        <taxon>Streptophyta</taxon>
        <taxon>Embryophyta</taxon>
        <taxon>Tracheophyta</taxon>
        <taxon>Spermatophyta</taxon>
        <taxon>Magnoliopsida</taxon>
        <taxon>Liliopsida</taxon>
        <taxon>Poales</taxon>
        <taxon>Poaceae</taxon>
        <taxon>BOP clade</taxon>
        <taxon>Oryzoideae</taxon>
        <taxon>Oryzeae</taxon>
        <taxon>Oryzinae</taxon>
        <taxon>Oryza</taxon>
        <taxon>Oryza sativa</taxon>
    </lineage>
</organism>
<proteinExistence type="evidence at transcript level"/>
<evidence type="ECO:0000250" key="1"/>
<evidence type="ECO:0000255" key="2"/>
<evidence type="ECO:0000255" key="3">
    <source>
        <dbReference type="PROSITE-ProRule" id="PRU00217"/>
    </source>
</evidence>
<evidence type="ECO:0000255" key="4">
    <source>
        <dbReference type="PROSITE-ProRule" id="PRU01251"/>
    </source>
</evidence>
<evidence type="ECO:0000269" key="5">
    <source>
    </source>
</evidence>
<evidence type="ECO:0000305" key="6"/>
<dbReference type="EMBL" id="AL731591">
    <property type="protein sequence ID" value="CAE05148.2"/>
    <property type="status" value="ALT_INIT"/>
    <property type="molecule type" value="Genomic_DNA"/>
</dbReference>
<dbReference type="EMBL" id="AP008210">
    <property type="protein sequence ID" value="BAF14579.1"/>
    <property type="status" value="ALT_SEQ"/>
    <property type="molecule type" value="Genomic_DNA"/>
</dbReference>
<dbReference type="EMBL" id="AP014960">
    <property type="status" value="NOT_ANNOTATED_CDS"/>
    <property type="molecule type" value="Genomic_DNA"/>
</dbReference>
<dbReference type="RefSeq" id="XP_015635530.1">
    <property type="nucleotide sequence ID" value="XM_015780044.1"/>
</dbReference>
<dbReference type="SMR" id="Q7F9I1"/>
<dbReference type="BioGRID" id="804739">
    <property type="interactions" value="1"/>
</dbReference>
<dbReference type="FunCoup" id="Q7F9I1">
    <property type="interactions" value="775"/>
</dbReference>
<dbReference type="STRING" id="39947.Q7F9I1"/>
<dbReference type="PaxDb" id="39947-Q7F9I1"/>
<dbReference type="KEGG" id="dosa:Os04g0397100"/>
<dbReference type="eggNOG" id="KOG1051">
    <property type="taxonomic scope" value="Eukaryota"/>
</dbReference>
<dbReference type="InParanoid" id="Q7F9I1"/>
<dbReference type="OrthoDB" id="47330at2759"/>
<dbReference type="Proteomes" id="UP000000763">
    <property type="component" value="Chromosome 4"/>
</dbReference>
<dbReference type="Proteomes" id="UP000059680">
    <property type="component" value="Chromosome 4"/>
</dbReference>
<dbReference type="GO" id="GO:0009507">
    <property type="term" value="C:chloroplast"/>
    <property type="evidence" value="ECO:0007669"/>
    <property type="project" value="UniProtKB-SubCell"/>
</dbReference>
<dbReference type="GO" id="GO:0005524">
    <property type="term" value="F:ATP binding"/>
    <property type="evidence" value="ECO:0007669"/>
    <property type="project" value="UniProtKB-KW"/>
</dbReference>
<dbReference type="GO" id="GO:0016887">
    <property type="term" value="F:ATP hydrolysis activity"/>
    <property type="evidence" value="ECO:0007669"/>
    <property type="project" value="InterPro"/>
</dbReference>
<dbReference type="CDD" id="cd00009">
    <property type="entry name" value="AAA"/>
    <property type="match status" value="1"/>
</dbReference>
<dbReference type="CDD" id="cd19499">
    <property type="entry name" value="RecA-like_ClpB_Hsp104-like"/>
    <property type="match status" value="1"/>
</dbReference>
<dbReference type="FunFam" id="1.10.8.60:FF:000017">
    <property type="entry name" value="ATP-dependent chaperone ClpB"/>
    <property type="match status" value="1"/>
</dbReference>
<dbReference type="FunFam" id="1.10.1780.10:FF:000004">
    <property type="entry name" value="ATP-dependent Clp protease ATP-binding subunit ClpC"/>
    <property type="match status" value="1"/>
</dbReference>
<dbReference type="FunFam" id="3.40.50.300:FF:000025">
    <property type="entry name" value="ATP-dependent Clp protease subunit"/>
    <property type="match status" value="1"/>
</dbReference>
<dbReference type="FunFam" id="3.40.50.300:FF:000010">
    <property type="entry name" value="Chaperone clpB 1, putative"/>
    <property type="match status" value="1"/>
</dbReference>
<dbReference type="Gene3D" id="1.10.8.60">
    <property type="match status" value="2"/>
</dbReference>
<dbReference type="Gene3D" id="1.10.1780.10">
    <property type="entry name" value="Clp, N-terminal domain"/>
    <property type="match status" value="1"/>
</dbReference>
<dbReference type="Gene3D" id="3.40.50.300">
    <property type="entry name" value="P-loop containing nucleotide triphosphate hydrolases"/>
    <property type="match status" value="2"/>
</dbReference>
<dbReference type="Gene3D" id="4.10.860.10">
    <property type="entry name" value="UVR domain"/>
    <property type="match status" value="1"/>
</dbReference>
<dbReference type="InterPro" id="IPR003593">
    <property type="entry name" value="AAA+_ATPase"/>
</dbReference>
<dbReference type="InterPro" id="IPR003959">
    <property type="entry name" value="ATPase_AAA_core"/>
</dbReference>
<dbReference type="InterPro" id="IPR019489">
    <property type="entry name" value="Clp_ATPase_C"/>
</dbReference>
<dbReference type="InterPro" id="IPR036628">
    <property type="entry name" value="Clp_N_dom_sf"/>
</dbReference>
<dbReference type="InterPro" id="IPR004176">
    <property type="entry name" value="Clp_R_dom"/>
</dbReference>
<dbReference type="InterPro" id="IPR001270">
    <property type="entry name" value="ClpA/B"/>
</dbReference>
<dbReference type="InterPro" id="IPR018368">
    <property type="entry name" value="ClpA/B_CS1"/>
</dbReference>
<dbReference type="InterPro" id="IPR028299">
    <property type="entry name" value="ClpA/B_CS2"/>
</dbReference>
<dbReference type="InterPro" id="IPR041546">
    <property type="entry name" value="ClpA/ClpB_AAA_lid"/>
</dbReference>
<dbReference type="InterPro" id="IPR050130">
    <property type="entry name" value="ClpA_ClpB"/>
</dbReference>
<dbReference type="InterPro" id="IPR027417">
    <property type="entry name" value="P-loop_NTPase"/>
</dbReference>
<dbReference type="InterPro" id="IPR001943">
    <property type="entry name" value="UVR_dom"/>
</dbReference>
<dbReference type="PANTHER" id="PTHR11638">
    <property type="entry name" value="ATP-DEPENDENT CLP PROTEASE"/>
    <property type="match status" value="1"/>
</dbReference>
<dbReference type="PANTHER" id="PTHR11638:SF155">
    <property type="entry name" value="CHAPERONE PROTEIN CLPC1, CHLOROPLASTIC-LIKE"/>
    <property type="match status" value="1"/>
</dbReference>
<dbReference type="Pfam" id="PF00004">
    <property type="entry name" value="AAA"/>
    <property type="match status" value="1"/>
</dbReference>
<dbReference type="Pfam" id="PF07724">
    <property type="entry name" value="AAA_2"/>
    <property type="match status" value="1"/>
</dbReference>
<dbReference type="Pfam" id="PF17871">
    <property type="entry name" value="AAA_lid_9"/>
    <property type="match status" value="1"/>
</dbReference>
<dbReference type="Pfam" id="PF02861">
    <property type="entry name" value="Clp_N"/>
    <property type="match status" value="2"/>
</dbReference>
<dbReference type="Pfam" id="PF10431">
    <property type="entry name" value="ClpB_D2-small"/>
    <property type="match status" value="1"/>
</dbReference>
<dbReference type="PRINTS" id="PR00300">
    <property type="entry name" value="CLPPROTEASEA"/>
</dbReference>
<dbReference type="SMART" id="SM00382">
    <property type="entry name" value="AAA"/>
    <property type="match status" value="2"/>
</dbReference>
<dbReference type="SMART" id="SM01086">
    <property type="entry name" value="ClpB_D2-small"/>
    <property type="match status" value="1"/>
</dbReference>
<dbReference type="SUPFAM" id="SSF81923">
    <property type="entry name" value="Double Clp-N motif"/>
    <property type="match status" value="1"/>
</dbReference>
<dbReference type="SUPFAM" id="SSF52540">
    <property type="entry name" value="P-loop containing nucleoside triphosphate hydrolases"/>
    <property type="match status" value="2"/>
</dbReference>
<dbReference type="PROSITE" id="PS51903">
    <property type="entry name" value="CLP_R"/>
    <property type="match status" value="1"/>
</dbReference>
<dbReference type="PROSITE" id="PS00870">
    <property type="entry name" value="CLPAB_1"/>
    <property type="match status" value="1"/>
</dbReference>
<dbReference type="PROSITE" id="PS00871">
    <property type="entry name" value="CLPAB_2"/>
    <property type="match status" value="1"/>
</dbReference>
<dbReference type="PROSITE" id="PS50151">
    <property type="entry name" value="UVR"/>
    <property type="match status" value="1"/>
</dbReference>
<sequence length="918" mass="101802">MEGSLVQSAIAPTIYRRSGTARFRVRARATMMRTMPTRTLTLGGFQGLRQTNFLDSRSVIKRDFGSIVASQISRPRGLGSRGVVRAMFERFTEKAIKVIMLAQEEARRLGHNFVGTEQILLGLIGEGTGIAAKVLKSMGINLKDARVEVEKIIGRGSGFVAVEIPFTPRAKRVLELSLEEARQLGHNYIGSEHLLLGLLREGEGVAARVLESLGADPNNIRTQVIRMVGESTEAVGAGVGGGSSGQKMPTLEEYGTNLTKLAEEGKLDPVVGRQDQIERVTQILGRRTKNNPCLIGEPGVGKTAIAEGLAQRISNGDVPETIEGKKVITLDMGLLVAGTKYRGEFEERLKKLMEEIKQNDDIILFIDEVHTLIGAGAAEGAIDAANILKPALARGELQCIGATTLDEYRKHIEKDPALERRFQPVKVPEPTVDETIQILRGLRERYELHHKLRYTDDSLIAAAQLSYQYISDRFLPDKAIDLIDEAGSRVRLRHAQLPDEAKELDKELRQVTKDKNEAVRGQDFEKAGELRDREMELKAQITAIIDKSKEMVKAETESGEVGPLVTEADIQHIVSSWTGIPVEKVSSDESDRLLKMEETLHTRIIGQDEAVKAISRAIRRARVGLKNPNRPIASFIFSGPTGVGKSELAKALAAYYFGSEEAMIRLDMSEFMERHTVSKLIGSPPGYVGYTEGGQLTEAVRRRPYTVVLFDEIEKAHPDVFNMMLQILEDGRLTDSKGRTVDFKNTLLIMTSNVGSSVIEKGGRKIGFDLDYDEKDTSYNRIKSLVTEELKQYFRPEFLNRLDEMIVFRQLTKLEVKEIADIMLKEVFDRLKAKDIDLQVTEKFRDRVVDEGYNPSYGARPLRRAIMRLLEDSLAEKMLAGEVKEGDSAIVDVDSEGKVIVLNGGSGVPEPLAPALSV</sequence>
<name>CLPC1_ORYSJ</name>
<accession>Q7F9I1</accession>
<accession>Q0JDK8</accession>